<proteinExistence type="inferred from homology"/>
<dbReference type="EMBL" id="X65201">
    <property type="protein sequence ID" value="CAA46320.1"/>
    <property type="status" value="ALT_INIT"/>
    <property type="molecule type" value="Genomic_DNA"/>
</dbReference>
<dbReference type="EMBL" id="U01834">
    <property type="protein sequence ID" value="AAA67144.1"/>
    <property type="molecule type" value="Genomic_DNA"/>
</dbReference>
<dbReference type="PIR" id="S28510">
    <property type="entry name" value="S28510"/>
</dbReference>
<dbReference type="RefSeq" id="NP_042014.1">
    <property type="nucleotide sequence ID" value="NC_001605.1"/>
</dbReference>
<dbReference type="SMR" id="P30735"/>
<dbReference type="GeneID" id="1488998"/>
<dbReference type="KEGG" id="vg:1488998"/>
<dbReference type="Proteomes" id="UP000007018">
    <property type="component" value="Segment"/>
</dbReference>
<dbReference type="GO" id="GO:0030430">
    <property type="term" value="C:host cell cytoplasm"/>
    <property type="evidence" value="ECO:0007669"/>
    <property type="project" value="UniProtKB-SubCell"/>
</dbReference>
<dbReference type="GO" id="GO:0042025">
    <property type="term" value="C:host cell nucleus"/>
    <property type="evidence" value="ECO:0007669"/>
    <property type="project" value="UniProtKB-SubCell"/>
</dbReference>
<dbReference type="GO" id="GO:0003677">
    <property type="term" value="F:DNA binding"/>
    <property type="evidence" value="ECO:0007669"/>
    <property type="project" value="UniProtKB-UniRule"/>
</dbReference>
<dbReference type="GO" id="GO:0008270">
    <property type="term" value="F:zinc ion binding"/>
    <property type="evidence" value="ECO:0007669"/>
    <property type="project" value="UniProtKB-KW"/>
</dbReference>
<dbReference type="GO" id="GO:0006351">
    <property type="term" value="P:DNA-templated transcription"/>
    <property type="evidence" value="ECO:0007669"/>
    <property type="project" value="UniProtKB-UniRule"/>
</dbReference>
<dbReference type="GO" id="GO:0006355">
    <property type="term" value="P:regulation of DNA-templated transcription"/>
    <property type="evidence" value="ECO:0007669"/>
    <property type="project" value="UniProtKB-UniRule"/>
</dbReference>
<dbReference type="GO" id="GO:0052150">
    <property type="term" value="P:symbiont-mediated perturbation of host apoptosis"/>
    <property type="evidence" value="ECO:0007669"/>
    <property type="project" value="UniProtKB-KW"/>
</dbReference>
<dbReference type="GO" id="GO:0039648">
    <property type="term" value="P:symbiont-mediated perturbation of host ubiquitin-like protein modification"/>
    <property type="evidence" value="ECO:0007669"/>
    <property type="project" value="UniProtKB-UniRule"/>
</dbReference>
<dbReference type="GO" id="GO:0052170">
    <property type="term" value="P:symbiont-mediated suppression of host innate immune response"/>
    <property type="evidence" value="ECO:0007669"/>
    <property type="project" value="UniProtKB-KW"/>
</dbReference>
<dbReference type="GO" id="GO:0039502">
    <property type="term" value="P:symbiont-mediated suppression of host type I interferon-mediated signaling pathway"/>
    <property type="evidence" value="ECO:0007669"/>
    <property type="project" value="UniProtKB-UniRule"/>
</dbReference>
<dbReference type="Gene3D" id="3.30.240.40">
    <property type="entry name" value="E6 early regulatory protein"/>
    <property type="match status" value="2"/>
</dbReference>
<dbReference type="HAMAP" id="MF_04006">
    <property type="entry name" value="HPV_E6"/>
    <property type="match status" value="1"/>
</dbReference>
<dbReference type="InterPro" id="IPR001334">
    <property type="entry name" value="E6"/>
</dbReference>
<dbReference type="InterPro" id="IPR038575">
    <property type="entry name" value="E6_sf"/>
</dbReference>
<dbReference type="Pfam" id="PF00518">
    <property type="entry name" value="E6"/>
    <property type="match status" value="1"/>
</dbReference>
<dbReference type="SUPFAM" id="SSF161229">
    <property type="entry name" value="E6 C-terminal domain-like"/>
    <property type="match status" value="2"/>
</dbReference>
<accession>P30735</accession>
<accession>Q84354</accession>
<keyword id="KW-0010">Activator</keyword>
<keyword id="KW-0238">DNA-binding</keyword>
<keyword id="KW-0244">Early protein</keyword>
<keyword id="KW-1035">Host cytoplasm</keyword>
<keyword id="KW-1048">Host nucleus</keyword>
<keyword id="KW-0945">Host-virus interaction</keyword>
<keyword id="KW-1090">Inhibition of host innate immune response by virus</keyword>
<keyword id="KW-0479">Metal-binding</keyword>
<keyword id="KW-1119">Modulation of host cell apoptosis by virus</keyword>
<keyword id="KW-1185">Reference proteome</keyword>
<keyword id="KW-0804">Transcription</keyword>
<keyword id="KW-0805">Transcription regulation</keyword>
<keyword id="KW-0899">Viral immunoevasion</keyword>
<keyword id="KW-0862">Zinc</keyword>
<keyword id="KW-0863">Zinc-finger</keyword>
<organism>
    <name type="scientific">Mastomys natalensis papillomavirus (isolate African multimammate rat)</name>
    <name type="common">MnPV</name>
    <dbReference type="NCBI Taxonomy" id="654915"/>
    <lineage>
        <taxon>Viruses</taxon>
        <taxon>Monodnaviria</taxon>
        <taxon>Shotokuvirae</taxon>
        <taxon>Cossaviricota</taxon>
        <taxon>Papovaviricetes</taxon>
        <taxon>Zurhausenvirales</taxon>
        <taxon>Papillomaviridae</taxon>
        <taxon>Firstpapillomavirinae</taxon>
        <taxon>Iotapapillomavirus</taxon>
        <taxon>Mastomys natalensis papillomavirus</taxon>
    </lineage>
</organism>
<comment type="function">
    <text evidence="1">Plays a major role in the induction and maintenance of cellular transformation. E6 associates with host UBE3A/E6-AP ubiquitin-protein ligase and modulates its activity. Protects host keratinocytes from apoptosis by mediating the degradation of host BAK1. May also inhibit host immune response.</text>
</comment>
<comment type="subunit">
    <text evidence="1">Forms homodimers. Interacts with ubiquitin-protein ligase UBE3A/E6-AP; this interaction stimulates UBE3A ubiquitin activity. Interacts with host BAK1.</text>
</comment>
<comment type="subcellular location">
    <subcellularLocation>
        <location evidence="1">Host cytoplasm</location>
    </subcellularLocation>
    <subcellularLocation>
        <location evidence="1">Host nucleus</location>
    </subcellularLocation>
</comment>
<comment type="similarity">
    <text evidence="1 2">Belongs to the papillomaviridae E6 protein family.</text>
</comment>
<comment type="sequence caution" evidence="2">
    <conflict type="erroneous initiation">
        <sequence resource="EMBL-CDS" id="CAA46320"/>
    </conflict>
    <text>Extended N-terminus.</text>
</comment>
<name>VE6_MNPVA</name>
<evidence type="ECO:0000255" key="1">
    <source>
        <dbReference type="HAMAP-Rule" id="MF_04006"/>
    </source>
</evidence>
<evidence type="ECO:0000305" key="2"/>
<gene>
    <name evidence="1" type="primary">E6</name>
</gene>
<reference key="1">
    <citation type="journal article" date="1992" name="Nucleic Acids Res.">
        <title>Primary structure of the E6 protein of Micromys minutus papillomavirus and Mastomys natalensis papillomavirus.</title>
        <authorList>
            <person name="van Ranst M."/>
            <person name="Tachezy R."/>
            <person name="Pruss J."/>
            <person name="Burk R."/>
        </authorList>
    </citation>
    <scope>NUCLEOTIDE SEQUENCE [GENOMIC DNA]</scope>
</reference>
<reference key="2">
    <citation type="journal article" date="1994" name="Virology">
        <title>The Mastomys natalensis papillomavirus: nucleotide sequence, genome organization, and phylogenetic relationship of a rodent papillomavirus involved in tumorigenesis of cutaneous epithelia.</title>
        <authorList>
            <person name="Tan C.-H."/>
            <person name="Tachezy R."/>
            <person name="van Ranst M."/>
            <person name="Chan S.-Y."/>
            <person name="Bernard H.-U."/>
            <person name="Burk R.D."/>
        </authorList>
    </citation>
    <scope>NUCLEOTIDE SEQUENCE [GENOMIC DNA]</scope>
</reference>
<protein>
    <recommendedName>
        <fullName evidence="1">Protein E6</fullName>
    </recommendedName>
</protein>
<feature type="chain" id="PRO_0000133388" description="Protein E6">
    <location>
        <begin position="1"/>
        <end position="135"/>
    </location>
</feature>
<feature type="zinc finger region" evidence="1">
    <location>
        <begin position="23"/>
        <end position="59"/>
    </location>
</feature>
<feature type="zinc finger region" evidence="1">
    <location>
        <begin position="96"/>
        <end position="132"/>
    </location>
</feature>
<organismHost>
    <name type="scientific">Mastomys natalensis</name>
    <name type="common">African soft-furred rat</name>
    <name type="synonym">Praomys natalensis</name>
    <dbReference type="NCBI Taxonomy" id="10112"/>
</organismHost>
<sequence length="135" mass="15468">MDRTVHSFVERLGIPREDLLLPCTFCSRFLTQEELTAFDFSAFNLVWRGRCAHGICTACARVCASLDLFLHHQNSRPLADVLRDENLTLHGLKARCRVCMKILSVTEKLECAERGESFAKVRGQWRARCRICKPV</sequence>